<feature type="initiator methionine" description="Removed" evidence="2">
    <location>
        <position position="1"/>
    </location>
</feature>
<feature type="chain" id="PRO_0000063486" description="Chaperonin GroEL">
    <location>
        <begin position="2"/>
        <end position="547"/>
    </location>
</feature>
<feature type="binding site" evidence="1">
    <location>
        <begin position="30"/>
        <end position="33"/>
    </location>
    <ligand>
        <name>ATP</name>
        <dbReference type="ChEBI" id="CHEBI:30616"/>
    </ligand>
</feature>
<feature type="binding site" evidence="1">
    <location>
        <position position="51"/>
    </location>
    <ligand>
        <name>ATP</name>
        <dbReference type="ChEBI" id="CHEBI:30616"/>
    </ligand>
</feature>
<feature type="binding site" evidence="1">
    <location>
        <begin position="87"/>
        <end position="91"/>
    </location>
    <ligand>
        <name>ATP</name>
        <dbReference type="ChEBI" id="CHEBI:30616"/>
    </ligand>
</feature>
<feature type="binding site" evidence="1">
    <location>
        <position position="415"/>
    </location>
    <ligand>
        <name>ATP</name>
        <dbReference type="ChEBI" id="CHEBI:30616"/>
    </ligand>
</feature>
<feature type="binding site" evidence="1">
    <location>
        <begin position="479"/>
        <end position="481"/>
    </location>
    <ligand>
        <name>ATP</name>
        <dbReference type="ChEBI" id="CHEBI:30616"/>
    </ligand>
</feature>
<feature type="binding site" evidence="1">
    <location>
        <position position="495"/>
    </location>
    <ligand>
        <name>ATP</name>
        <dbReference type="ChEBI" id="CHEBI:30616"/>
    </ligand>
</feature>
<feature type="sequence conflict" description="In Ref. 1; AAA25830 and 2; AAB34346." evidence="3" ref="1 2">
    <original>KAN</original>
    <variation>RPT</variation>
    <location>
        <begin position="80"/>
        <end position="82"/>
    </location>
</feature>
<feature type="sequence conflict" description="In Ref. 1; AAA25830." evidence="3" ref="1">
    <original>A</original>
    <variation>P</variation>
    <location>
        <position position="123"/>
    </location>
</feature>
<feature type="sequence conflict" description="In Ref. 1; AAA25830." evidence="3" ref="1">
    <original>CA</original>
    <variation>WR</variation>
    <location>
        <begin position="138"/>
        <end position="139"/>
    </location>
</feature>
<feature type="sequence conflict" description="In Ref. 1; AAA25830." evidence="3" ref="1">
    <original>NA</original>
    <variation>KP</variation>
    <location>
        <begin position="319"/>
        <end position="320"/>
    </location>
</feature>
<feature type="sequence conflict" description="In Ref. 3; AAA53369." evidence="3" ref="3">
    <original>A</original>
    <variation>G</variation>
    <location>
        <position position="370"/>
    </location>
</feature>
<feature type="sequence conflict" description="In Ref. 1; AAA25830 and 2; AAB34346." evidence="3" ref="1 2">
    <original>R</original>
    <variation>P</variation>
    <location>
        <position position="395"/>
    </location>
</feature>
<feature type="sequence conflict" description="In Ref. 1; AAA25830 and 2; AAB34346." evidence="3" ref="1 2">
    <original>L</original>
    <variation>V</variation>
    <location>
        <position position="451"/>
    </location>
</feature>
<protein>
    <recommendedName>
        <fullName evidence="1">Chaperonin GroEL</fullName>
        <ecNumber evidence="1">5.6.1.7</ecNumber>
    </recommendedName>
    <alternativeName>
        <fullName evidence="1">60 kDa chaperonin</fullName>
    </alternativeName>
    <alternativeName>
        <fullName evidence="1">Chaperonin-60</fullName>
        <shortName evidence="1">Cpn60</shortName>
    </alternativeName>
</protein>
<sequence length="547" mass="57086">MAAKEVKFGDSARKKMLVGVNVLADAVKATLGPKGRNVVLDKSFGAPTITKDGVSVAKEIELKDKFENMGAQLVKDVASKANDAAGDGTTTATVLAQAIVNEGLKAVAAGMNPMDLKRGIDKATVAIVAQLKELAKPCADTKAIAQVGTISANSDESIGQIIAEAMEKVGKEGVITVEEGSGLENELSVVEGMQFDRGYLSPYFVNKPDTMAAELDSPLLLLVDKKISNIREMLPVLEAVAKAGRPLLIVAEDVEGEALATLVVNNMRGIVKVAAVKAPGFGDRRKAMLQDIAILTGGTVISEEVGLSLEGATLEHLGNAKRVVINKENTTIIDGAGVQADIEARVLQIRKQIEETTSDYDREKLQERLAKLAGGVAVIKVGAATEVEMKEKKARVEDALHATRAAVEEGVVPGGGVALVRALQAIEGLKGDNEEQNVGIALLRRAVESPLRQIVANAGDEPSVVVDKVKQGSGNYGFNAATGVYGDMIEMGILDPAKVTRSALQAAASIGGLMITTEAMVAEIVEDKPAMGGMPDMGGMGGMGGMM</sequence>
<accession>P30718</accession>
<dbReference type="EC" id="5.6.1.7" evidence="1"/>
<dbReference type="EMBL" id="M63957">
    <property type="protein sequence ID" value="AAA25830.1"/>
    <property type="molecule type" value="Genomic_DNA"/>
</dbReference>
<dbReference type="EMBL" id="S77424">
    <property type="protein sequence ID" value="AAB34346.1"/>
    <property type="molecule type" value="Genomic_DNA"/>
</dbReference>
<dbReference type="EMBL" id="U17072">
    <property type="protein sequence ID" value="AAA53369.1"/>
    <property type="molecule type" value="Genomic_DNA"/>
</dbReference>
<dbReference type="EMBL" id="AE004091">
    <property type="protein sequence ID" value="AAG07773.1"/>
    <property type="molecule type" value="Genomic_DNA"/>
</dbReference>
<dbReference type="PIR" id="B43606">
    <property type="entry name" value="B43606"/>
</dbReference>
<dbReference type="PIR" id="B83098">
    <property type="entry name" value="B83098"/>
</dbReference>
<dbReference type="RefSeq" id="NP_253075.1">
    <property type="nucleotide sequence ID" value="NC_002516.2"/>
</dbReference>
<dbReference type="RefSeq" id="WP_003094059.1">
    <property type="nucleotide sequence ID" value="NZ_QZGE01000004.1"/>
</dbReference>
<dbReference type="SMR" id="P30718"/>
<dbReference type="FunCoup" id="P30718">
    <property type="interactions" value="1096"/>
</dbReference>
<dbReference type="STRING" id="208964.PA4385"/>
<dbReference type="PaxDb" id="208964-PA4385"/>
<dbReference type="GeneID" id="881348"/>
<dbReference type="KEGG" id="pae:PA4385"/>
<dbReference type="PATRIC" id="fig|208964.12.peg.4593"/>
<dbReference type="PseudoCAP" id="PA4385"/>
<dbReference type="HOGENOM" id="CLU_016503_3_0_6"/>
<dbReference type="InParanoid" id="P30718"/>
<dbReference type="OrthoDB" id="9766614at2"/>
<dbReference type="PhylomeDB" id="P30718"/>
<dbReference type="BioCyc" id="PAER208964:G1FZ6-4471-MONOMER"/>
<dbReference type="Proteomes" id="UP000002438">
    <property type="component" value="Chromosome"/>
</dbReference>
<dbReference type="GO" id="GO:1990220">
    <property type="term" value="C:GroEL-GroES complex"/>
    <property type="evidence" value="ECO:0000318"/>
    <property type="project" value="GO_Central"/>
</dbReference>
<dbReference type="GO" id="GO:0005524">
    <property type="term" value="F:ATP binding"/>
    <property type="evidence" value="ECO:0000318"/>
    <property type="project" value="GO_Central"/>
</dbReference>
<dbReference type="GO" id="GO:0140662">
    <property type="term" value="F:ATP-dependent protein folding chaperone"/>
    <property type="evidence" value="ECO:0007669"/>
    <property type="project" value="InterPro"/>
</dbReference>
<dbReference type="GO" id="GO:0016853">
    <property type="term" value="F:isomerase activity"/>
    <property type="evidence" value="ECO:0007669"/>
    <property type="project" value="UniProtKB-KW"/>
</dbReference>
<dbReference type="GO" id="GO:0051082">
    <property type="term" value="F:unfolded protein binding"/>
    <property type="evidence" value="ECO:0000318"/>
    <property type="project" value="GO_Central"/>
</dbReference>
<dbReference type="GO" id="GO:0051085">
    <property type="term" value="P:chaperone cofactor-dependent protein refolding"/>
    <property type="evidence" value="ECO:0000318"/>
    <property type="project" value="GO_Central"/>
</dbReference>
<dbReference type="GO" id="GO:0042026">
    <property type="term" value="P:protein refolding"/>
    <property type="evidence" value="ECO:0007669"/>
    <property type="project" value="UniProtKB-UniRule"/>
</dbReference>
<dbReference type="GO" id="GO:0009408">
    <property type="term" value="P:response to heat"/>
    <property type="evidence" value="ECO:0000318"/>
    <property type="project" value="GO_Central"/>
</dbReference>
<dbReference type="CDD" id="cd03344">
    <property type="entry name" value="GroEL"/>
    <property type="match status" value="1"/>
</dbReference>
<dbReference type="FunFam" id="1.10.560.10:FF:000001">
    <property type="entry name" value="60 kDa chaperonin"/>
    <property type="match status" value="1"/>
</dbReference>
<dbReference type="FunFam" id="3.50.7.10:FF:000001">
    <property type="entry name" value="60 kDa chaperonin"/>
    <property type="match status" value="1"/>
</dbReference>
<dbReference type="Gene3D" id="3.50.7.10">
    <property type="entry name" value="GroEL"/>
    <property type="match status" value="1"/>
</dbReference>
<dbReference type="Gene3D" id="1.10.560.10">
    <property type="entry name" value="GroEL-like equatorial domain"/>
    <property type="match status" value="1"/>
</dbReference>
<dbReference type="Gene3D" id="3.30.260.10">
    <property type="entry name" value="TCP-1-like chaperonin intermediate domain"/>
    <property type="match status" value="1"/>
</dbReference>
<dbReference type="HAMAP" id="MF_00600">
    <property type="entry name" value="CH60"/>
    <property type="match status" value="1"/>
</dbReference>
<dbReference type="InterPro" id="IPR018370">
    <property type="entry name" value="Chaperonin_Cpn60_CS"/>
</dbReference>
<dbReference type="InterPro" id="IPR001844">
    <property type="entry name" value="Cpn60/GroEL"/>
</dbReference>
<dbReference type="InterPro" id="IPR002423">
    <property type="entry name" value="Cpn60/GroEL/TCP-1"/>
</dbReference>
<dbReference type="InterPro" id="IPR027409">
    <property type="entry name" value="GroEL-like_apical_dom_sf"/>
</dbReference>
<dbReference type="InterPro" id="IPR027413">
    <property type="entry name" value="GROEL-like_equatorial_sf"/>
</dbReference>
<dbReference type="InterPro" id="IPR027410">
    <property type="entry name" value="TCP-1-like_intermed_sf"/>
</dbReference>
<dbReference type="NCBIfam" id="TIGR02348">
    <property type="entry name" value="GroEL"/>
    <property type="match status" value="1"/>
</dbReference>
<dbReference type="NCBIfam" id="NF000592">
    <property type="entry name" value="PRK00013.1"/>
    <property type="match status" value="1"/>
</dbReference>
<dbReference type="NCBIfam" id="NF009487">
    <property type="entry name" value="PRK12849.1"/>
    <property type="match status" value="1"/>
</dbReference>
<dbReference type="NCBIfam" id="NF009488">
    <property type="entry name" value="PRK12850.1"/>
    <property type="match status" value="1"/>
</dbReference>
<dbReference type="NCBIfam" id="NF009489">
    <property type="entry name" value="PRK12851.1"/>
    <property type="match status" value="1"/>
</dbReference>
<dbReference type="PANTHER" id="PTHR45633">
    <property type="entry name" value="60 KDA HEAT SHOCK PROTEIN, MITOCHONDRIAL"/>
    <property type="match status" value="1"/>
</dbReference>
<dbReference type="Pfam" id="PF00118">
    <property type="entry name" value="Cpn60_TCP1"/>
    <property type="match status" value="1"/>
</dbReference>
<dbReference type="PRINTS" id="PR00298">
    <property type="entry name" value="CHAPERONIN60"/>
</dbReference>
<dbReference type="SUPFAM" id="SSF52029">
    <property type="entry name" value="GroEL apical domain-like"/>
    <property type="match status" value="1"/>
</dbReference>
<dbReference type="SUPFAM" id="SSF48592">
    <property type="entry name" value="GroEL equatorial domain-like"/>
    <property type="match status" value="1"/>
</dbReference>
<dbReference type="SUPFAM" id="SSF54849">
    <property type="entry name" value="GroEL-intermediate domain like"/>
    <property type="match status" value="1"/>
</dbReference>
<dbReference type="PROSITE" id="PS00296">
    <property type="entry name" value="CHAPERONINS_CPN60"/>
    <property type="match status" value="1"/>
</dbReference>
<organism>
    <name type="scientific">Pseudomonas aeruginosa (strain ATCC 15692 / DSM 22644 / CIP 104116 / JCM 14847 / LMG 12228 / 1C / PRS 101 / PAO1)</name>
    <dbReference type="NCBI Taxonomy" id="208964"/>
    <lineage>
        <taxon>Bacteria</taxon>
        <taxon>Pseudomonadati</taxon>
        <taxon>Pseudomonadota</taxon>
        <taxon>Gammaproteobacteria</taxon>
        <taxon>Pseudomonadales</taxon>
        <taxon>Pseudomonadaceae</taxon>
        <taxon>Pseudomonas</taxon>
    </lineage>
</organism>
<keyword id="KW-0067">ATP-binding</keyword>
<keyword id="KW-0143">Chaperone</keyword>
<keyword id="KW-0963">Cytoplasm</keyword>
<keyword id="KW-0903">Direct protein sequencing</keyword>
<keyword id="KW-0413">Isomerase</keyword>
<keyword id="KW-0547">Nucleotide-binding</keyword>
<keyword id="KW-1185">Reference proteome</keyword>
<comment type="function">
    <text evidence="1">Together with its co-chaperonin GroES, plays an essential role in assisting protein folding. The GroEL-GroES system forms a nano-cage that allows encapsulation of the non-native substrate proteins and provides a physical environment optimized to promote and accelerate protein folding.</text>
</comment>
<comment type="catalytic activity">
    <reaction evidence="1">
        <text>ATP + H2O + a folded polypeptide = ADP + phosphate + an unfolded polypeptide.</text>
        <dbReference type="EC" id="5.6.1.7"/>
    </reaction>
</comment>
<comment type="subunit">
    <text evidence="1">Forms a cylinder of 14 subunits composed of two heptameric rings stacked back-to-back. Interacts with the co-chaperonin GroES.</text>
</comment>
<comment type="subcellular location">
    <subcellularLocation>
        <location evidence="1">Cytoplasm</location>
    </subcellularLocation>
</comment>
<comment type="similarity">
    <text evidence="1">Belongs to the chaperonin (HSP60) family.</text>
</comment>
<proteinExistence type="evidence at protein level"/>
<gene>
    <name evidence="1" type="primary">groEL</name>
    <name evidence="1" type="synonym">groL</name>
    <name type="synonym">mopA</name>
    <name type="ordered locus">PA4385</name>
</gene>
<reference key="1">
    <citation type="journal article" date="1991" name="Infect. Immun.">
        <title>Cloning and sequencing of the genes coding for the 10- and 60-kDa heat shock proteins from Pseudomonas aeruginosa and mapping of a species-specific epitope.</title>
        <authorList>
            <person name="Sipos A."/>
            <person name="Klocke M."/>
            <person name="Frosch M."/>
        </authorList>
    </citation>
    <scope>NUCLEOTIDE SEQUENCE [GENOMIC DNA]</scope>
</reference>
<reference key="2">
    <citation type="journal article" date="1995" name="APMIS">
        <title>Cloning and nucleotide sequence comparison of the groE operon of Pseudomonas aeruginosa and Burkholderia cepacia.</title>
        <authorList>
            <person name="Jensen P."/>
            <person name="Fomsgaard A."/>
            <person name="Hoiby N."/>
            <person name="Hindersson P."/>
        </authorList>
    </citation>
    <scope>NUCLEOTIDE SEQUENCE [GENOMIC DNA]</scope>
    <source>
        <strain>P1118 / O:3</strain>
    </source>
</reference>
<reference key="3">
    <citation type="journal article" date="1996" name="Can. J. Microbiol.">
        <title>Physical mapping of several heat-shock genes in Pseudomonas aeruginosa and the cloning of the mopA (GroEL) gene.</title>
        <authorList>
            <person name="Farinha M.A."/>
            <person name="Mockett R."/>
            <person name="Went C.J."/>
            <person name="Jardine S."/>
            <person name="Naczynski L.M."/>
            <person name="Kropinski A.M."/>
        </authorList>
    </citation>
    <scope>NUCLEOTIDE SEQUENCE [GENOMIC DNA]</scope>
    <source>
        <strain>PAO / AK957</strain>
    </source>
</reference>
<reference key="4">
    <citation type="journal article" date="2000" name="Nature">
        <title>Complete genome sequence of Pseudomonas aeruginosa PAO1, an opportunistic pathogen.</title>
        <authorList>
            <person name="Stover C.K."/>
            <person name="Pham X.-Q.T."/>
            <person name="Erwin A.L."/>
            <person name="Mizoguchi S.D."/>
            <person name="Warrener P."/>
            <person name="Hickey M.J."/>
            <person name="Brinkman F.S.L."/>
            <person name="Hufnagle W.O."/>
            <person name="Kowalik D.J."/>
            <person name="Lagrou M."/>
            <person name="Garber R.L."/>
            <person name="Goltry L."/>
            <person name="Tolentino E."/>
            <person name="Westbrock-Wadman S."/>
            <person name="Yuan Y."/>
            <person name="Brody L.L."/>
            <person name="Coulter S.N."/>
            <person name="Folger K.R."/>
            <person name="Kas A."/>
            <person name="Larbig K."/>
            <person name="Lim R.M."/>
            <person name="Smith K.A."/>
            <person name="Spencer D.H."/>
            <person name="Wong G.K.-S."/>
            <person name="Wu Z."/>
            <person name="Paulsen I.T."/>
            <person name="Reizer J."/>
            <person name="Saier M.H. Jr."/>
            <person name="Hancock R.E.W."/>
            <person name="Lory S."/>
            <person name="Olson M.V."/>
        </authorList>
    </citation>
    <scope>NUCLEOTIDE SEQUENCE [LARGE SCALE GENOMIC DNA]</scope>
    <source>
        <strain>ATCC 15692 / DSM 22644 / CIP 104116 / JCM 14847 / LMG 12228 / 1C / PRS 101 / PAO1</strain>
    </source>
</reference>
<reference key="5">
    <citation type="submission" date="2009-08" db="UniProtKB">
        <authorList>
            <person name="Noman M."/>
            <person name="Qader U.L."/>
            <person name="Aman A."/>
            <person name="Bano S."/>
            <person name="Azhar A."/>
            <person name="Basit A."/>
        </authorList>
    </citation>
    <scope>PROTEIN SEQUENCE OF 2-11</scope>
    <source>
        <strain>BN-1</strain>
    </source>
</reference>
<reference key="6">
    <citation type="thesis" date="2005" institute="Ben-Gurion University" country="Israel">
        <title>Biofouling in water treatment systems: effect of membrane properties on biofilm formation.</title>
        <authorList>
            <person name="Liddor M."/>
        </authorList>
    </citation>
    <scope>PROTEIN SEQUENCE OF 16-28; 64-75; 81-105; 143-168; 172-197; 232-268; 323-345 AND 405-498</scope>
    <source>
        <strain>ATCC 33467 / type 1 smooth</strain>
        <strain>ATCC 33468 / type 2 mucoid</strain>
    </source>
</reference>
<evidence type="ECO:0000255" key="1">
    <source>
        <dbReference type="HAMAP-Rule" id="MF_00600"/>
    </source>
</evidence>
<evidence type="ECO:0000269" key="2">
    <source ref="5"/>
</evidence>
<evidence type="ECO:0000305" key="3"/>
<name>CH60_PSEAE</name>